<sequence>MNNMNLNNMNLNNMNLLKEVSEENRLMLLKDYFQTSGLVKHQLETFDHFIFHDIKTIIDDEASIIFNGKRSLSSQIKNGAVEEGYNRKESEKIMLKFENVFVAKPTITNDDTTVRPLYPAEARQKMITYDSFVFVDVLEYVLRDEEEILVNKHLRVQIAKIPIMLRSSTCNLYNCTPQERIELGEGIEDPGGYFIINGNERVLIGQLRNAYNRSICFRNKFSEPLTCDMRSMSEETGHSVLIQLRLNDSPISQKRNLKKLDKNGTIDLIISQTKTPIPISFVFRVLKVATIDKLKFLIGDEEELDKYLIKIVEETSDGGIFDDMEIEISQEDDFNEENEESTEKKKITQFIEQDMFPHLGVSSTHEEKAILLGKMVRKLLLVNETSINANKFAQRANDETNKTNKTNKMYYTQEDRDNYSNKRVETAGVLCFELFRMLYKRFIKSNINQLEKRNRVEMDVISKNAFITTGLHFSFSTGNWGVQKNNYIRTGVAQIPQNKVSFGAFFSYLRRFVIPMGKEGKNTKIRQIHPSSIFFACPSETPEGQFVGITLNFSMLAEVSIRTSSVVIKEIIEASHQAFKHVHEISLEENKQFLSKLSIIFVNGGICGLTSKPQQLLSDVRDLKLKHCLKYDVSAVFIPELKEVHISSDAGRFIRPVLNLQSIKTNGNVMWNSFQNCLENGHVVYKDAYEIEQSQIAINLQDLSRYPTVYDSMEIHASCMLGVMAAQIPFAEHTQSPRLCYQSSMAKQAIGNIPSHHVKSDNTTRVMDYVQRPLVTTQIAEMNRFNDFPNGLNAMVAVAIYTGFNQEDSIILNKASIDRGMFHVVTYKTIIVEERKIGVNEKICMPVASVRRMNNYSLLEDNPESPYFGVVKVKSFVKRNDVLVGKVITKISKDGTRQETDHSTIVSISEEGKVDRIIRTSKKGILMFKIVIAQQKRPEIGDKFCSAMAQKGTVGMILEEVDMPFMEDGSIPDMIINPHCLPSRMTINQIMASIMGKTCCAKNETFGDASPFQESSLEKPQDKIHALCKELEECGYNYNGTETMMCGWNGKKLRAEIFFGPVYYHRLTHMVSDKIFSRASTNQKRHAITRQPLNGRANEGGLRIGEMEKDCMLVHGISKFLHEKMFDQSDKFIINLCVPCKSYFKVVKTQNGFFCSGCNGIDIVKFNCPFAAKLFFQELTAMGQKLEFKVKNA</sequence>
<feature type="chain" id="PRO_0000377755" description="Probable DNA-directed RNA polymerase II subunit RPB2 homolog">
    <location>
        <begin position="1"/>
        <end position="1193"/>
    </location>
</feature>
<feature type="zinc finger region" description="C4-type" evidence="2">
    <location>
        <begin position="1137"/>
        <end position="1158"/>
    </location>
</feature>
<feature type="binding site" evidence="1">
    <location>
        <position position="808"/>
    </location>
    <ligand>
        <name>Mg(2+)</name>
        <dbReference type="ChEBI" id="CHEBI:18420"/>
        <note>ligand shared with DNA-directed RNA polymerase largest subunit</note>
    </ligand>
</feature>
<feature type="binding site" evidence="1">
    <location>
        <position position="1137"/>
    </location>
    <ligand>
        <name>Zn(2+)</name>
        <dbReference type="ChEBI" id="CHEBI:29105"/>
    </ligand>
</feature>
<feature type="binding site" evidence="1">
    <location>
        <position position="1140"/>
    </location>
    <ligand>
        <name>Zn(2+)</name>
        <dbReference type="ChEBI" id="CHEBI:29105"/>
    </ligand>
</feature>
<feature type="binding site" evidence="1">
    <location>
        <position position="1155"/>
    </location>
    <ligand>
        <name>Zn(2+)</name>
        <dbReference type="ChEBI" id="CHEBI:29105"/>
    </ligand>
</feature>
<feature type="binding site" evidence="1">
    <location>
        <position position="1158"/>
    </location>
    <ligand>
        <name>Zn(2+)</name>
        <dbReference type="ChEBI" id="CHEBI:29105"/>
    </ligand>
</feature>
<comment type="function">
    <text evidence="1">Component of the DNA-dependent RNA polymerase that catalyzes the transcription of DNA into RNA using the four ribonucleoside triphosphates as substrates. Second largest component of RNA polymerase II which synthesizes mRNA precursors and many functional non-coding RNAs. Proposed to contribute to the polymerase catalytic activity and forms the polymerase active center together with the largest subunit (By similarity).</text>
</comment>
<comment type="catalytic activity">
    <reaction>
        <text>RNA(n) + a ribonucleoside 5'-triphosphate = RNA(n+1) + diphosphate</text>
        <dbReference type="Rhea" id="RHEA:21248"/>
        <dbReference type="Rhea" id="RHEA-COMP:14527"/>
        <dbReference type="Rhea" id="RHEA-COMP:17342"/>
        <dbReference type="ChEBI" id="CHEBI:33019"/>
        <dbReference type="ChEBI" id="CHEBI:61557"/>
        <dbReference type="ChEBI" id="CHEBI:140395"/>
        <dbReference type="EC" id="2.7.7.6"/>
    </reaction>
</comment>
<comment type="similarity">
    <text evidence="3">Belongs to the RNA polymerase beta chain family.</text>
</comment>
<evidence type="ECO:0000250" key="1"/>
<evidence type="ECO:0000255" key="2"/>
<evidence type="ECO:0000305" key="3"/>
<gene>
    <name type="ORF">IIV6-428L</name>
</gene>
<dbReference type="EC" id="2.7.7.6"/>
<dbReference type="EMBL" id="AF303741">
    <property type="protein sequence ID" value="AAK82288.1"/>
    <property type="molecule type" value="Genomic_DNA"/>
</dbReference>
<dbReference type="RefSeq" id="NP_149891.1">
    <property type="nucleotide sequence ID" value="NC_003038.1"/>
</dbReference>
<dbReference type="SMR" id="Q91F97"/>
<dbReference type="KEGG" id="vg:1733408"/>
<dbReference type="Proteomes" id="UP000001359">
    <property type="component" value="Genome"/>
</dbReference>
<dbReference type="GO" id="GO:0000428">
    <property type="term" value="C:DNA-directed RNA polymerase complex"/>
    <property type="evidence" value="ECO:0007669"/>
    <property type="project" value="UniProtKB-KW"/>
</dbReference>
<dbReference type="GO" id="GO:0003677">
    <property type="term" value="F:DNA binding"/>
    <property type="evidence" value="ECO:0007669"/>
    <property type="project" value="InterPro"/>
</dbReference>
<dbReference type="GO" id="GO:0003899">
    <property type="term" value="F:DNA-directed RNA polymerase activity"/>
    <property type="evidence" value="ECO:0007669"/>
    <property type="project" value="UniProtKB-EC"/>
</dbReference>
<dbReference type="GO" id="GO:0032549">
    <property type="term" value="F:ribonucleoside binding"/>
    <property type="evidence" value="ECO:0007669"/>
    <property type="project" value="InterPro"/>
</dbReference>
<dbReference type="GO" id="GO:0008270">
    <property type="term" value="F:zinc ion binding"/>
    <property type="evidence" value="ECO:0007669"/>
    <property type="project" value="UniProtKB-KW"/>
</dbReference>
<dbReference type="GO" id="GO:0006351">
    <property type="term" value="P:DNA-templated transcription"/>
    <property type="evidence" value="ECO:0007669"/>
    <property type="project" value="InterPro"/>
</dbReference>
<dbReference type="CDD" id="cd00653">
    <property type="entry name" value="RNA_pol_B_RPB2"/>
    <property type="match status" value="1"/>
</dbReference>
<dbReference type="Gene3D" id="2.40.50.150">
    <property type="match status" value="1"/>
</dbReference>
<dbReference type="Gene3D" id="3.90.1100.10">
    <property type="match status" value="2"/>
</dbReference>
<dbReference type="Gene3D" id="2.40.270.10">
    <property type="entry name" value="DNA-directed RNA polymerase, subunit 2, domain 6"/>
    <property type="match status" value="1"/>
</dbReference>
<dbReference type="Gene3D" id="3.90.1800.10">
    <property type="entry name" value="RNA polymerase alpha subunit dimerisation domain"/>
    <property type="match status" value="1"/>
</dbReference>
<dbReference type="Gene3D" id="3.90.1110.10">
    <property type="entry name" value="RNA polymerase Rpb2, domain 2"/>
    <property type="match status" value="1"/>
</dbReference>
<dbReference type="InterPro" id="IPR015712">
    <property type="entry name" value="DNA-dir_RNA_pol_su2"/>
</dbReference>
<dbReference type="InterPro" id="IPR007120">
    <property type="entry name" value="DNA-dir_RNAP_su2_dom"/>
</dbReference>
<dbReference type="InterPro" id="IPR037033">
    <property type="entry name" value="DNA-dir_RNAP_su2_hyb_sf"/>
</dbReference>
<dbReference type="InterPro" id="IPR007644">
    <property type="entry name" value="RNA_pol_bsu_protrusion"/>
</dbReference>
<dbReference type="InterPro" id="IPR037034">
    <property type="entry name" value="RNA_pol_Rpb2_2_sf"/>
</dbReference>
<dbReference type="InterPro" id="IPR007645">
    <property type="entry name" value="RNA_pol_Rpb2_3"/>
</dbReference>
<dbReference type="InterPro" id="IPR007646">
    <property type="entry name" value="RNA_pol_Rpb2_4"/>
</dbReference>
<dbReference type="InterPro" id="IPR007641">
    <property type="entry name" value="RNA_pol_Rpb2_7"/>
</dbReference>
<dbReference type="InterPro" id="IPR014724">
    <property type="entry name" value="RNA_pol_RPB2_OB-fold"/>
</dbReference>
<dbReference type="PANTHER" id="PTHR20856">
    <property type="entry name" value="DNA-DIRECTED RNA POLYMERASE I SUBUNIT 2"/>
    <property type="match status" value="1"/>
</dbReference>
<dbReference type="Pfam" id="PF04563">
    <property type="entry name" value="RNA_pol_Rpb2_1"/>
    <property type="match status" value="1"/>
</dbReference>
<dbReference type="Pfam" id="PF04565">
    <property type="entry name" value="RNA_pol_Rpb2_3"/>
    <property type="match status" value="1"/>
</dbReference>
<dbReference type="Pfam" id="PF04566">
    <property type="entry name" value="RNA_pol_Rpb2_4"/>
    <property type="match status" value="1"/>
</dbReference>
<dbReference type="Pfam" id="PF00562">
    <property type="entry name" value="RNA_pol_Rpb2_6"/>
    <property type="match status" value="1"/>
</dbReference>
<dbReference type="Pfam" id="PF04560">
    <property type="entry name" value="RNA_pol_Rpb2_7"/>
    <property type="match status" value="1"/>
</dbReference>
<dbReference type="SUPFAM" id="SSF64484">
    <property type="entry name" value="beta and beta-prime subunits of DNA dependent RNA-polymerase"/>
    <property type="match status" value="1"/>
</dbReference>
<organism>
    <name type="scientific">Invertebrate iridescent virus 6</name>
    <name type="common">IIV-6</name>
    <name type="synonym">Chilo iridescent virus</name>
    <dbReference type="NCBI Taxonomy" id="176652"/>
    <lineage>
        <taxon>Viruses</taxon>
        <taxon>Varidnaviria</taxon>
        <taxon>Bamfordvirae</taxon>
        <taxon>Nucleocytoviricota</taxon>
        <taxon>Megaviricetes</taxon>
        <taxon>Pimascovirales</taxon>
        <taxon>Iridoviridae</taxon>
        <taxon>Betairidovirinae</taxon>
        <taxon>Iridovirus</taxon>
    </lineage>
</organism>
<organismHost>
    <name type="scientific">Acheta domesticus</name>
    <name type="common">House cricket</name>
    <dbReference type="NCBI Taxonomy" id="6997"/>
</organismHost>
<organismHost>
    <name type="scientific">Chilo suppressalis</name>
    <name type="common">Asiatic rice borer moth</name>
    <dbReference type="NCBI Taxonomy" id="168631"/>
</organismHost>
<organismHost>
    <name type="scientific">Gryllus bimaculatus</name>
    <name type="common">Two-spotted cricket</name>
    <dbReference type="NCBI Taxonomy" id="6999"/>
</organismHost>
<organismHost>
    <name type="scientific">Gryllus campestris</name>
    <dbReference type="NCBI Taxonomy" id="58607"/>
</organismHost>
<organismHost>
    <name type="scientific">Spodoptera frugiperda</name>
    <name type="common">Fall armyworm</name>
    <dbReference type="NCBI Taxonomy" id="7108"/>
</organismHost>
<reference key="1">
    <citation type="journal article" date="2001" name="Virology">
        <title>Analysis of the first complete DNA sequence of an invertebrate iridovirus: coding strategy of the genome of Chilo iridescent virus.</title>
        <authorList>
            <person name="Jakob N.J."/>
            <person name="Mueller K."/>
            <person name="Bahr U."/>
            <person name="Darai G."/>
        </authorList>
    </citation>
    <scope>NUCLEOTIDE SEQUENCE [LARGE SCALE GENOMIC DNA]</scope>
</reference>
<reference key="2">
    <citation type="journal article" date="2007" name="Virol. J.">
        <title>Comparative genomic analysis of the family Iridoviridae: re-annotating and defining the core set of iridovirus genes.</title>
        <authorList>
            <person name="Eaton H.E."/>
            <person name="Metcalf J."/>
            <person name="Penny E."/>
            <person name="Tcherepanov V."/>
            <person name="Upton C."/>
            <person name="Brunetti C.R."/>
        </authorList>
    </citation>
    <scope>GENOME REANNOTATION</scope>
</reference>
<protein>
    <recommendedName>
        <fullName>Probable DNA-directed RNA polymerase II subunit RPB2 homolog</fullName>
        <ecNumber>2.7.7.6</ecNumber>
    </recommendedName>
</protein>
<keyword id="KW-0240">DNA-directed RNA polymerase</keyword>
<keyword id="KW-0460">Magnesium</keyword>
<keyword id="KW-0479">Metal-binding</keyword>
<keyword id="KW-0548">Nucleotidyltransferase</keyword>
<keyword id="KW-1185">Reference proteome</keyword>
<keyword id="KW-0804">Transcription</keyword>
<keyword id="KW-0808">Transferase</keyword>
<keyword id="KW-0862">Zinc</keyword>
<keyword id="KW-0863">Zinc-finger</keyword>
<name>RPB2_IIV6</name>
<proteinExistence type="inferred from homology"/>
<accession>Q91F97</accession>